<reference key="1">
    <citation type="journal article" date="2007" name="PLoS Genet.">
        <title>Patterns and implications of gene gain and loss in the evolution of Prochlorococcus.</title>
        <authorList>
            <person name="Kettler G.C."/>
            <person name="Martiny A.C."/>
            <person name="Huang K."/>
            <person name="Zucker J."/>
            <person name="Coleman M.L."/>
            <person name="Rodrigue S."/>
            <person name="Chen F."/>
            <person name="Lapidus A."/>
            <person name="Ferriera S."/>
            <person name="Johnson J."/>
            <person name="Steglich C."/>
            <person name="Church G.M."/>
            <person name="Richardson P."/>
            <person name="Chisholm S.W."/>
        </authorList>
    </citation>
    <scope>NUCLEOTIDE SEQUENCE [LARGE SCALE GENOMIC DNA]</scope>
    <source>
        <strain>NATL2A</strain>
    </source>
</reference>
<protein>
    <recommendedName>
        <fullName evidence="1">Small ribosomal subunit protein bS16</fullName>
    </recommendedName>
    <alternativeName>
        <fullName evidence="3">30S ribosomal protein S16</fullName>
    </alternativeName>
</protein>
<organism>
    <name type="scientific">Prochlorococcus marinus (strain NATL2A)</name>
    <dbReference type="NCBI Taxonomy" id="59920"/>
    <lineage>
        <taxon>Bacteria</taxon>
        <taxon>Bacillati</taxon>
        <taxon>Cyanobacteriota</taxon>
        <taxon>Cyanophyceae</taxon>
        <taxon>Synechococcales</taxon>
        <taxon>Prochlorococcaceae</taxon>
        <taxon>Prochlorococcus</taxon>
    </lineage>
</organism>
<accession>Q46JI5</accession>
<keyword id="KW-1185">Reference proteome</keyword>
<keyword id="KW-0687">Ribonucleoprotein</keyword>
<keyword id="KW-0689">Ribosomal protein</keyword>
<name>RS16_PROMT</name>
<feature type="chain" id="PRO_0000243846" description="Small ribosomal subunit protein bS16">
    <location>
        <begin position="1"/>
        <end position="110"/>
    </location>
</feature>
<feature type="region of interest" description="Disordered" evidence="2">
    <location>
        <begin position="81"/>
        <end position="110"/>
    </location>
</feature>
<feature type="compositionally biased region" description="Basic and acidic residues" evidence="2">
    <location>
        <begin position="81"/>
        <end position="104"/>
    </location>
</feature>
<sequence length="110" mass="12485">MIKLRLKRFGKKRETSFRLVACNSTSRRDGRPLQELGFYNPRTKETRLDTEALRTRLGQGAQPTDAVRTLLEKGGLLEKKVRPAEVLGKQKQEKERSAKKKDAAASETSE</sequence>
<proteinExistence type="inferred from homology"/>
<comment type="similarity">
    <text evidence="1">Belongs to the bacterial ribosomal protein bS16 family.</text>
</comment>
<dbReference type="EMBL" id="CP000095">
    <property type="protein sequence ID" value="AAZ58343.1"/>
    <property type="molecule type" value="Genomic_DNA"/>
</dbReference>
<dbReference type="RefSeq" id="WP_011294940.1">
    <property type="nucleotide sequence ID" value="NC_007335.2"/>
</dbReference>
<dbReference type="SMR" id="Q46JI5"/>
<dbReference type="STRING" id="59920.PMN2A_0852"/>
<dbReference type="KEGG" id="pmn:PMN2A_0852"/>
<dbReference type="HOGENOM" id="CLU_100590_3_2_3"/>
<dbReference type="OrthoDB" id="9807878at2"/>
<dbReference type="PhylomeDB" id="Q46JI5"/>
<dbReference type="Proteomes" id="UP000002535">
    <property type="component" value="Chromosome"/>
</dbReference>
<dbReference type="GO" id="GO:0005737">
    <property type="term" value="C:cytoplasm"/>
    <property type="evidence" value="ECO:0007669"/>
    <property type="project" value="UniProtKB-ARBA"/>
</dbReference>
<dbReference type="GO" id="GO:0015935">
    <property type="term" value="C:small ribosomal subunit"/>
    <property type="evidence" value="ECO:0007669"/>
    <property type="project" value="TreeGrafter"/>
</dbReference>
<dbReference type="GO" id="GO:0003735">
    <property type="term" value="F:structural constituent of ribosome"/>
    <property type="evidence" value="ECO:0007669"/>
    <property type="project" value="InterPro"/>
</dbReference>
<dbReference type="GO" id="GO:0006412">
    <property type="term" value="P:translation"/>
    <property type="evidence" value="ECO:0007669"/>
    <property type="project" value="UniProtKB-UniRule"/>
</dbReference>
<dbReference type="Gene3D" id="3.30.1320.10">
    <property type="match status" value="1"/>
</dbReference>
<dbReference type="HAMAP" id="MF_00385">
    <property type="entry name" value="Ribosomal_bS16"/>
    <property type="match status" value="1"/>
</dbReference>
<dbReference type="InterPro" id="IPR000307">
    <property type="entry name" value="Ribosomal_bS16"/>
</dbReference>
<dbReference type="InterPro" id="IPR020592">
    <property type="entry name" value="Ribosomal_bS16_CS"/>
</dbReference>
<dbReference type="InterPro" id="IPR023803">
    <property type="entry name" value="Ribosomal_bS16_dom_sf"/>
</dbReference>
<dbReference type="NCBIfam" id="TIGR00002">
    <property type="entry name" value="S16"/>
    <property type="match status" value="1"/>
</dbReference>
<dbReference type="PANTHER" id="PTHR12919">
    <property type="entry name" value="30S RIBOSOMAL PROTEIN S16"/>
    <property type="match status" value="1"/>
</dbReference>
<dbReference type="PANTHER" id="PTHR12919:SF20">
    <property type="entry name" value="SMALL RIBOSOMAL SUBUNIT PROTEIN BS16M"/>
    <property type="match status" value="1"/>
</dbReference>
<dbReference type="Pfam" id="PF00886">
    <property type="entry name" value="Ribosomal_S16"/>
    <property type="match status" value="1"/>
</dbReference>
<dbReference type="SUPFAM" id="SSF54565">
    <property type="entry name" value="Ribosomal protein S16"/>
    <property type="match status" value="1"/>
</dbReference>
<dbReference type="PROSITE" id="PS00732">
    <property type="entry name" value="RIBOSOMAL_S16"/>
    <property type="match status" value="1"/>
</dbReference>
<evidence type="ECO:0000255" key="1">
    <source>
        <dbReference type="HAMAP-Rule" id="MF_00385"/>
    </source>
</evidence>
<evidence type="ECO:0000256" key="2">
    <source>
        <dbReference type="SAM" id="MobiDB-lite"/>
    </source>
</evidence>
<evidence type="ECO:0000305" key="3"/>
<gene>
    <name evidence="1" type="primary">rpsP</name>
    <name evidence="1" type="synonym">rps16</name>
    <name type="ordered locus">PMN2A_0852</name>
</gene>